<proteinExistence type="inferred from homology"/>
<gene>
    <name evidence="1" type="primary">ilvD</name>
    <name type="ordered locus">Csal_2664</name>
</gene>
<feature type="chain" id="PRO_0000321594" description="Dihydroxy-acid dehydratase">
    <location>
        <begin position="1"/>
        <end position="570"/>
    </location>
</feature>
<feature type="region of interest" description="Disordered" evidence="2">
    <location>
        <begin position="1"/>
        <end position="25"/>
    </location>
</feature>
<feature type="active site" description="Proton acceptor" evidence="1">
    <location>
        <position position="479"/>
    </location>
</feature>
<feature type="binding site" evidence="1">
    <location>
        <position position="60"/>
    </location>
    <ligand>
        <name>[2Fe-2S] cluster</name>
        <dbReference type="ChEBI" id="CHEBI:190135"/>
    </ligand>
</feature>
<feature type="binding site" evidence="1">
    <location>
        <position position="92"/>
    </location>
    <ligand>
        <name>Mg(2+)</name>
        <dbReference type="ChEBI" id="CHEBI:18420"/>
    </ligand>
</feature>
<feature type="binding site" evidence="1">
    <location>
        <position position="133"/>
    </location>
    <ligand>
        <name>[2Fe-2S] cluster</name>
        <dbReference type="ChEBI" id="CHEBI:190135"/>
    </ligand>
</feature>
<feature type="binding site" evidence="1">
    <location>
        <position position="134"/>
    </location>
    <ligand>
        <name>Mg(2+)</name>
        <dbReference type="ChEBI" id="CHEBI:18420"/>
    </ligand>
</feature>
<feature type="binding site" description="via carbamate group" evidence="1">
    <location>
        <position position="135"/>
    </location>
    <ligand>
        <name>Mg(2+)</name>
        <dbReference type="ChEBI" id="CHEBI:18420"/>
    </ligand>
</feature>
<feature type="binding site" evidence="1">
    <location>
        <position position="202"/>
    </location>
    <ligand>
        <name>[2Fe-2S] cluster</name>
        <dbReference type="ChEBI" id="CHEBI:190135"/>
    </ligand>
</feature>
<feature type="binding site" evidence="1">
    <location>
        <position position="453"/>
    </location>
    <ligand>
        <name>Mg(2+)</name>
        <dbReference type="ChEBI" id="CHEBI:18420"/>
    </ligand>
</feature>
<feature type="modified residue" description="N6-carboxylysine" evidence="1">
    <location>
        <position position="135"/>
    </location>
</feature>
<name>ILVD_CHRSD</name>
<comment type="function">
    <text evidence="1">Functions in the biosynthesis of branched-chain amino acids. Catalyzes the dehydration of (2R,3R)-2,3-dihydroxy-3-methylpentanoate (2,3-dihydroxy-3-methylvalerate) into 2-oxo-3-methylpentanoate (2-oxo-3-methylvalerate) and of (2R)-2,3-dihydroxy-3-methylbutanoate (2,3-dihydroxyisovalerate) into 2-oxo-3-methylbutanoate (2-oxoisovalerate), the penultimate precursor to L-isoleucine and L-valine, respectively.</text>
</comment>
<comment type="catalytic activity">
    <reaction evidence="1">
        <text>(2R)-2,3-dihydroxy-3-methylbutanoate = 3-methyl-2-oxobutanoate + H2O</text>
        <dbReference type="Rhea" id="RHEA:24809"/>
        <dbReference type="ChEBI" id="CHEBI:11851"/>
        <dbReference type="ChEBI" id="CHEBI:15377"/>
        <dbReference type="ChEBI" id="CHEBI:49072"/>
        <dbReference type="EC" id="4.2.1.9"/>
    </reaction>
    <physiologicalReaction direction="left-to-right" evidence="1">
        <dbReference type="Rhea" id="RHEA:24810"/>
    </physiologicalReaction>
</comment>
<comment type="catalytic activity">
    <reaction evidence="1">
        <text>(2R,3R)-2,3-dihydroxy-3-methylpentanoate = (S)-3-methyl-2-oxopentanoate + H2O</text>
        <dbReference type="Rhea" id="RHEA:27694"/>
        <dbReference type="ChEBI" id="CHEBI:15377"/>
        <dbReference type="ChEBI" id="CHEBI:35146"/>
        <dbReference type="ChEBI" id="CHEBI:49258"/>
        <dbReference type="EC" id="4.2.1.9"/>
    </reaction>
    <physiologicalReaction direction="left-to-right" evidence="1">
        <dbReference type="Rhea" id="RHEA:27695"/>
    </physiologicalReaction>
</comment>
<comment type="cofactor">
    <cofactor evidence="1">
        <name>[2Fe-2S] cluster</name>
        <dbReference type="ChEBI" id="CHEBI:190135"/>
    </cofactor>
    <text evidence="1">Binds 1 [2Fe-2S] cluster per subunit. This cluster acts as a Lewis acid cofactor.</text>
</comment>
<comment type="cofactor">
    <cofactor evidence="1">
        <name>Mg(2+)</name>
        <dbReference type="ChEBI" id="CHEBI:18420"/>
    </cofactor>
</comment>
<comment type="pathway">
    <text evidence="1">Amino-acid biosynthesis; L-isoleucine biosynthesis; L-isoleucine from 2-oxobutanoate: step 3/4.</text>
</comment>
<comment type="pathway">
    <text evidence="1">Amino-acid biosynthesis; L-valine biosynthesis; L-valine from pyruvate: step 3/4.</text>
</comment>
<comment type="subunit">
    <text evidence="1">Homodimer.</text>
</comment>
<comment type="similarity">
    <text evidence="1">Belongs to the IlvD/Edd family.</text>
</comment>
<reference key="1">
    <citation type="journal article" date="2011" name="Stand. Genomic Sci.">
        <title>Complete genome sequence of the halophilic and highly halotolerant Chromohalobacter salexigens type strain (1H11(T)).</title>
        <authorList>
            <person name="Copeland A."/>
            <person name="O'Connor K."/>
            <person name="Lucas S."/>
            <person name="Lapidus A."/>
            <person name="Berry K.W."/>
            <person name="Detter J.C."/>
            <person name="Del Rio T.G."/>
            <person name="Hammon N."/>
            <person name="Dalin E."/>
            <person name="Tice H."/>
            <person name="Pitluck S."/>
            <person name="Bruce D."/>
            <person name="Goodwin L."/>
            <person name="Han C."/>
            <person name="Tapia R."/>
            <person name="Saunders E."/>
            <person name="Schmutz J."/>
            <person name="Brettin T."/>
            <person name="Larimer F."/>
            <person name="Land M."/>
            <person name="Hauser L."/>
            <person name="Vargas C."/>
            <person name="Nieto J.J."/>
            <person name="Kyrpides N.C."/>
            <person name="Ivanova N."/>
            <person name="Goker M."/>
            <person name="Klenk H.P."/>
            <person name="Csonka L.N."/>
            <person name="Woyke T."/>
        </authorList>
    </citation>
    <scope>NUCLEOTIDE SEQUENCE [LARGE SCALE GENOMIC DNA]</scope>
    <source>
        <strain>ATCC BAA-138 / DSM 3043 / CIP 106854 / NCIMB 13768 / 1H11</strain>
    </source>
</reference>
<protein>
    <recommendedName>
        <fullName evidence="1">Dihydroxy-acid dehydratase</fullName>
        <shortName evidence="1">DAD</shortName>
        <ecNumber evidence="1">4.2.1.9</ecNumber>
    </recommendedName>
</protein>
<dbReference type="EC" id="4.2.1.9" evidence="1"/>
<dbReference type="EMBL" id="CP000285">
    <property type="protein sequence ID" value="ABE60011.1"/>
    <property type="molecule type" value="Genomic_DNA"/>
</dbReference>
<dbReference type="RefSeq" id="WP_011507957.1">
    <property type="nucleotide sequence ID" value="NC_007963.1"/>
</dbReference>
<dbReference type="SMR" id="Q1QU47"/>
<dbReference type="STRING" id="290398.Csal_2664"/>
<dbReference type="GeneID" id="95335362"/>
<dbReference type="KEGG" id="csa:Csal_2664"/>
<dbReference type="eggNOG" id="COG0129">
    <property type="taxonomic scope" value="Bacteria"/>
</dbReference>
<dbReference type="HOGENOM" id="CLU_014271_4_2_6"/>
<dbReference type="OrthoDB" id="9807077at2"/>
<dbReference type="UniPathway" id="UPA00047">
    <property type="reaction ID" value="UER00057"/>
</dbReference>
<dbReference type="UniPathway" id="UPA00049">
    <property type="reaction ID" value="UER00061"/>
</dbReference>
<dbReference type="Proteomes" id="UP000000239">
    <property type="component" value="Chromosome"/>
</dbReference>
<dbReference type="GO" id="GO:0051537">
    <property type="term" value="F:2 iron, 2 sulfur cluster binding"/>
    <property type="evidence" value="ECO:0007669"/>
    <property type="project" value="UniProtKB-UniRule"/>
</dbReference>
<dbReference type="GO" id="GO:0004160">
    <property type="term" value="F:dihydroxy-acid dehydratase activity"/>
    <property type="evidence" value="ECO:0007669"/>
    <property type="project" value="UniProtKB-UniRule"/>
</dbReference>
<dbReference type="GO" id="GO:0000287">
    <property type="term" value="F:magnesium ion binding"/>
    <property type="evidence" value="ECO:0007669"/>
    <property type="project" value="UniProtKB-UniRule"/>
</dbReference>
<dbReference type="GO" id="GO:0009097">
    <property type="term" value="P:isoleucine biosynthetic process"/>
    <property type="evidence" value="ECO:0007669"/>
    <property type="project" value="UniProtKB-UniRule"/>
</dbReference>
<dbReference type="GO" id="GO:0009099">
    <property type="term" value="P:L-valine biosynthetic process"/>
    <property type="evidence" value="ECO:0007669"/>
    <property type="project" value="UniProtKB-UniRule"/>
</dbReference>
<dbReference type="FunFam" id="3.50.30.80:FF:000001">
    <property type="entry name" value="Dihydroxy-acid dehydratase"/>
    <property type="match status" value="1"/>
</dbReference>
<dbReference type="Gene3D" id="3.50.30.80">
    <property type="entry name" value="IlvD/EDD C-terminal domain-like"/>
    <property type="match status" value="1"/>
</dbReference>
<dbReference type="HAMAP" id="MF_00012">
    <property type="entry name" value="IlvD"/>
    <property type="match status" value="1"/>
</dbReference>
<dbReference type="InterPro" id="IPR050165">
    <property type="entry name" value="DHAD_IlvD/Edd"/>
</dbReference>
<dbReference type="InterPro" id="IPR042096">
    <property type="entry name" value="Dihydro-acid_dehy_C"/>
</dbReference>
<dbReference type="InterPro" id="IPR004404">
    <property type="entry name" value="DihydroxyA_deHydtase"/>
</dbReference>
<dbReference type="InterPro" id="IPR020558">
    <property type="entry name" value="DiOHA_6PGluconate_deHydtase_CS"/>
</dbReference>
<dbReference type="InterPro" id="IPR056740">
    <property type="entry name" value="ILV_EDD_C"/>
</dbReference>
<dbReference type="InterPro" id="IPR000581">
    <property type="entry name" value="ILV_EDD_N"/>
</dbReference>
<dbReference type="InterPro" id="IPR037237">
    <property type="entry name" value="IlvD/EDD_N"/>
</dbReference>
<dbReference type="NCBIfam" id="TIGR00110">
    <property type="entry name" value="ilvD"/>
    <property type="match status" value="1"/>
</dbReference>
<dbReference type="NCBIfam" id="NF002068">
    <property type="entry name" value="PRK00911.1"/>
    <property type="match status" value="1"/>
</dbReference>
<dbReference type="PANTHER" id="PTHR21000">
    <property type="entry name" value="DIHYDROXY-ACID DEHYDRATASE DAD"/>
    <property type="match status" value="1"/>
</dbReference>
<dbReference type="PANTHER" id="PTHR21000:SF5">
    <property type="entry name" value="DIHYDROXY-ACID DEHYDRATASE, MITOCHONDRIAL"/>
    <property type="match status" value="1"/>
</dbReference>
<dbReference type="Pfam" id="PF24877">
    <property type="entry name" value="ILV_EDD_C"/>
    <property type="match status" value="1"/>
</dbReference>
<dbReference type="Pfam" id="PF00920">
    <property type="entry name" value="ILVD_EDD_N"/>
    <property type="match status" value="1"/>
</dbReference>
<dbReference type="SUPFAM" id="SSF143975">
    <property type="entry name" value="IlvD/EDD N-terminal domain-like"/>
    <property type="match status" value="1"/>
</dbReference>
<dbReference type="SUPFAM" id="SSF52016">
    <property type="entry name" value="LeuD/IlvD-like"/>
    <property type="match status" value="1"/>
</dbReference>
<dbReference type="PROSITE" id="PS00886">
    <property type="entry name" value="ILVD_EDD_1"/>
    <property type="match status" value="1"/>
</dbReference>
<dbReference type="PROSITE" id="PS00887">
    <property type="entry name" value="ILVD_EDD_2"/>
    <property type="match status" value="1"/>
</dbReference>
<evidence type="ECO:0000255" key="1">
    <source>
        <dbReference type="HAMAP-Rule" id="MF_00012"/>
    </source>
</evidence>
<evidence type="ECO:0000256" key="2">
    <source>
        <dbReference type="SAM" id="MobiDB-lite"/>
    </source>
</evidence>
<accession>Q1QU47</accession>
<organism>
    <name type="scientific">Chromohalobacter salexigens (strain ATCC BAA-138 / DSM 3043 / CIP 106854 / NCIMB 13768 / 1H11)</name>
    <dbReference type="NCBI Taxonomy" id="290398"/>
    <lineage>
        <taxon>Bacteria</taxon>
        <taxon>Pseudomonadati</taxon>
        <taxon>Pseudomonadota</taxon>
        <taxon>Gammaproteobacteria</taxon>
        <taxon>Oceanospirillales</taxon>
        <taxon>Halomonadaceae</taxon>
        <taxon>Chromohalobacter</taxon>
    </lineage>
</organism>
<keyword id="KW-0001">2Fe-2S</keyword>
<keyword id="KW-0028">Amino-acid biosynthesis</keyword>
<keyword id="KW-0100">Branched-chain amino acid biosynthesis</keyword>
<keyword id="KW-0408">Iron</keyword>
<keyword id="KW-0411">Iron-sulfur</keyword>
<keyword id="KW-0456">Lyase</keyword>
<keyword id="KW-0460">Magnesium</keyword>
<keyword id="KW-0479">Metal-binding</keyword>
<keyword id="KW-1185">Reference proteome</keyword>
<sequence length="570" mass="59651">MSQQDSPANADHRRRHSSIVVDGPGKAASRAMLRAVGFTDEDFKKPQVGIASTWSRVTPCNSHINVLADAASDGADAAGGKGVVFNTITISDGIANGTEGMKYSMASREIIADSIEAVSGCEGFDGVVAIGGCDKNMPGCMIGLARLNRPSIFVYGGTIQPGAGHTDLVSVFEAMGAYSQGNKSLIEVKQIEEVAIPGPGSCGGMYTANTMASAIEAMGMSLPNSSAQDAVSQSKKDDSRAAGEAVLKLLELDIKPSDIMTRKAFENAITVVIALGGSTNAVLHLIAMANTIGVELSLDDFTEIGKRVPVLADLRPSGHYLMSELVAIGGIQPMMKILLDAGLLHGDCLTVTGKTLAENLADVTPYPTGQEIIKPLEAPIKSSSHLRILYGNLAPEGAVAKITGKEGTRFTGRARVFNSEEEAQARINDLTVAAGDVVVIRYEGPKGGPGMREMLTPTSAIMGRGLGDKVALITDGRFSGGSHGFVVGHITPEAFVGGPIGLVEDGDEITIDAENDIMTLHIDDAEMARRRAAWKRPAPRYTRGTLAKYAKTVSSASKGAVTDLPEALDD</sequence>